<feature type="chain" id="PRO_0000379270" description="ATP-dependent helicase/nuclease subunit A">
    <location>
        <begin position="1"/>
        <end position="1264"/>
    </location>
</feature>
<feature type="domain" description="UvrD-like helicase ATP-binding" evidence="1">
    <location>
        <begin position="12"/>
        <end position="482"/>
    </location>
</feature>
<feature type="domain" description="UvrD-like helicase C-terminal" evidence="1">
    <location>
        <begin position="520"/>
        <end position="808"/>
    </location>
</feature>
<feature type="binding site" evidence="1">
    <location>
        <begin position="33"/>
        <end position="40"/>
    </location>
    <ligand>
        <name>ATP</name>
        <dbReference type="ChEBI" id="CHEBI:30616"/>
    </ligand>
</feature>
<keyword id="KW-0067">ATP-binding</keyword>
<keyword id="KW-0227">DNA damage</keyword>
<keyword id="KW-0234">DNA repair</keyword>
<keyword id="KW-0238">DNA-binding</keyword>
<keyword id="KW-0269">Exonuclease</keyword>
<keyword id="KW-0347">Helicase</keyword>
<keyword id="KW-0378">Hydrolase</keyword>
<keyword id="KW-0413">Isomerase</keyword>
<keyword id="KW-0540">Nuclease</keyword>
<keyword id="KW-0547">Nucleotide-binding</keyword>
<keyword id="KW-1185">Reference proteome</keyword>
<reference key="1">
    <citation type="journal article" date="2003" name="Science">
        <title>Role of mobile DNA in the evolution of vancomycin-resistant Enterococcus faecalis.</title>
        <authorList>
            <person name="Paulsen I.T."/>
            <person name="Banerjei L."/>
            <person name="Myers G.S.A."/>
            <person name="Nelson K.E."/>
            <person name="Seshadri R."/>
            <person name="Read T.D."/>
            <person name="Fouts D.E."/>
            <person name="Eisen J.A."/>
            <person name="Gill S.R."/>
            <person name="Heidelberg J.F."/>
            <person name="Tettelin H."/>
            <person name="Dodson R.J."/>
            <person name="Umayam L.A."/>
            <person name="Brinkac L.M."/>
            <person name="Beanan M.J."/>
            <person name="Daugherty S.C."/>
            <person name="DeBoy R.T."/>
            <person name="Durkin S.A."/>
            <person name="Kolonay J.F."/>
            <person name="Madupu R."/>
            <person name="Nelson W.C."/>
            <person name="Vamathevan J.J."/>
            <person name="Tran B."/>
            <person name="Upton J."/>
            <person name="Hansen T."/>
            <person name="Shetty J."/>
            <person name="Khouri H.M."/>
            <person name="Utterback T.R."/>
            <person name="Radune D."/>
            <person name="Ketchum K.A."/>
            <person name="Dougherty B.A."/>
            <person name="Fraser C.M."/>
        </authorList>
    </citation>
    <scope>NUCLEOTIDE SEQUENCE [LARGE SCALE GENOMIC DNA]</scope>
    <source>
        <strain>ATCC 700802 / V583</strain>
    </source>
</reference>
<evidence type="ECO:0000255" key="1">
    <source>
        <dbReference type="HAMAP-Rule" id="MF_01451"/>
    </source>
</evidence>
<organism>
    <name type="scientific">Enterococcus faecalis (strain ATCC 700802 / V583)</name>
    <dbReference type="NCBI Taxonomy" id="226185"/>
    <lineage>
        <taxon>Bacteria</taxon>
        <taxon>Bacillati</taxon>
        <taxon>Bacillota</taxon>
        <taxon>Bacilli</taxon>
        <taxon>Lactobacillales</taxon>
        <taxon>Enterococcaceae</taxon>
        <taxon>Enterococcus</taxon>
    </lineage>
</organism>
<gene>
    <name evidence="1" type="primary">addA</name>
    <name type="synonym">rexA</name>
    <name type="ordered locus">EF_1113</name>
</gene>
<dbReference type="EC" id="3.1.-.-" evidence="1"/>
<dbReference type="EC" id="5.6.2.4" evidence="1"/>
<dbReference type="EMBL" id="AE016830">
    <property type="protein sequence ID" value="AAO80913.1"/>
    <property type="molecule type" value="Genomic_DNA"/>
</dbReference>
<dbReference type="RefSeq" id="NP_814843.1">
    <property type="nucleotide sequence ID" value="NC_004668.1"/>
</dbReference>
<dbReference type="RefSeq" id="WP_002416113.1">
    <property type="nucleotide sequence ID" value="NZ_KE136528.1"/>
</dbReference>
<dbReference type="SMR" id="Q836J8"/>
<dbReference type="STRING" id="226185.EF_1113"/>
<dbReference type="DNASU" id="1200015"/>
<dbReference type="EnsemblBacteria" id="AAO80913">
    <property type="protein sequence ID" value="AAO80913"/>
    <property type="gene ID" value="EF_1113"/>
</dbReference>
<dbReference type="KEGG" id="efa:EF1113"/>
<dbReference type="PATRIC" id="fig|226185.45.peg.2382"/>
<dbReference type="eggNOG" id="COG1074">
    <property type="taxonomic scope" value="Bacteria"/>
</dbReference>
<dbReference type="HOGENOM" id="CLU_001114_3_1_9"/>
<dbReference type="Proteomes" id="UP000001415">
    <property type="component" value="Chromosome"/>
</dbReference>
<dbReference type="GO" id="GO:0005829">
    <property type="term" value="C:cytosol"/>
    <property type="evidence" value="ECO:0007669"/>
    <property type="project" value="TreeGrafter"/>
</dbReference>
<dbReference type="GO" id="GO:0033202">
    <property type="term" value="C:DNA helicase complex"/>
    <property type="evidence" value="ECO:0007669"/>
    <property type="project" value="TreeGrafter"/>
</dbReference>
<dbReference type="GO" id="GO:0043138">
    <property type="term" value="F:3'-5' DNA helicase activity"/>
    <property type="evidence" value="ECO:0007669"/>
    <property type="project" value="UniProtKB-UniRule"/>
</dbReference>
<dbReference type="GO" id="GO:0008408">
    <property type="term" value="F:3'-5' exonuclease activity"/>
    <property type="evidence" value="ECO:0007669"/>
    <property type="project" value="UniProtKB-UniRule"/>
</dbReference>
<dbReference type="GO" id="GO:0005524">
    <property type="term" value="F:ATP binding"/>
    <property type="evidence" value="ECO:0007669"/>
    <property type="project" value="UniProtKB-UniRule"/>
</dbReference>
<dbReference type="GO" id="GO:0016887">
    <property type="term" value="F:ATP hydrolysis activity"/>
    <property type="evidence" value="ECO:0007669"/>
    <property type="project" value="RHEA"/>
</dbReference>
<dbReference type="GO" id="GO:0003690">
    <property type="term" value="F:double-stranded DNA binding"/>
    <property type="evidence" value="ECO:0007669"/>
    <property type="project" value="UniProtKB-UniRule"/>
</dbReference>
<dbReference type="GO" id="GO:0000724">
    <property type="term" value="P:double-strand break repair via homologous recombination"/>
    <property type="evidence" value="ECO:0007669"/>
    <property type="project" value="UniProtKB-UniRule"/>
</dbReference>
<dbReference type="CDD" id="cd17932">
    <property type="entry name" value="DEXQc_UvrD"/>
    <property type="match status" value="1"/>
</dbReference>
<dbReference type="Gene3D" id="3.90.320.10">
    <property type="match status" value="1"/>
</dbReference>
<dbReference type="Gene3D" id="3.40.50.300">
    <property type="entry name" value="P-loop containing nucleotide triphosphate hydrolases"/>
    <property type="match status" value="4"/>
</dbReference>
<dbReference type="HAMAP" id="MF_01451">
    <property type="entry name" value="AddA"/>
    <property type="match status" value="1"/>
</dbReference>
<dbReference type="InterPro" id="IPR014152">
    <property type="entry name" value="AddA"/>
</dbReference>
<dbReference type="InterPro" id="IPR014017">
    <property type="entry name" value="DNA_helicase_UvrD-like_C"/>
</dbReference>
<dbReference type="InterPro" id="IPR000212">
    <property type="entry name" value="DNA_helicase_UvrD/REP"/>
</dbReference>
<dbReference type="InterPro" id="IPR027417">
    <property type="entry name" value="P-loop_NTPase"/>
</dbReference>
<dbReference type="InterPro" id="IPR011604">
    <property type="entry name" value="PDDEXK-like_dom_sf"/>
</dbReference>
<dbReference type="InterPro" id="IPR038726">
    <property type="entry name" value="PDDEXK_AddAB-type"/>
</dbReference>
<dbReference type="InterPro" id="IPR011335">
    <property type="entry name" value="Restrct_endonuc-II-like"/>
</dbReference>
<dbReference type="InterPro" id="IPR014016">
    <property type="entry name" value="UvrD-like_ATP-bd"/>
</dbReference>
<dbReference type="NCBIfam" id="TIGR02785">
    <property type="entry name" value="addA_Gpos"/>
    <property type="match status" value="1"/>
</dbReference>
<dbReference type="PANTHER" id="PTHR11070:SF48">
    <property type="entry name" value="ATP-DEPENDENT HELICASE_NUCLEASE SUBUNIT A"/>
    <property type="match status" value="1"/>
</dbReference>
<dbReference type="PANTHER" id="PTHR11070">
    <property type="entry name" value="UVRD / RECB / PCRA DNA HELICASE FAMILY MEMBER"/>
    <property type="match status" value="1"/>
</dbReference>
<dbReference type="Pfam" id="PF12705">
    <property type="entry name" value="PDDEXK_1"/>
    <property type="match status" value="1"/>
</dbReference>
<dbReference type="Pfam" id="PF00580">
    <property type="entry name" value="UvrD-helicase"/>
    <property type="match status" value="1"/>
</dbReference>
<dbReference type="Pfam" id="PF13361">
    <property type="entry name" value="UvrD_C"/>
    <property type="match status" value="1"/>
</dbReference>
<dbReference type="SUPFAM" id="SSF52540">
    <property type="entry name" value="P-loop containing nucleoside triphosphate hydrolases"/>
    <property type="match status" value="1"/>
</dbReference>
<dbReference type="SUPFAM" id="SSF52980">
    <property type="entry name" value="Restriction endonuclease-like"/>
    <property type="match status" value="1"/>
</dbReference>
<dbReference type="PROSITE" id="PS51198">
    <property type="entry name" value="UVRD_HELICASE_ATP_BIND"/>
    <property type="match status" value="1"/>
</dbReference>
<dbReference type="PROSITE" id="PS51217">
    <property type="entry name" value="UVRD_HELICASE_CTER"/>
    <property type="match status" value="1"/>
</dbReference>
<comment type="function">
    <text evidence="1">The heterodimer acts as both an ATP-dependent DNA helicase and an ATP-dependent, dual-direction single-stranded exonuclease. Recognizes the chi site generating a DNA molecule suitable for the initiation of homologous recombination. The AddA nuclease domain is required for chi fragment generation; this subunit has the helicase and 3' -&gt; 5' nuclease activities.</text>
</comment>
<comment type="catalytic activity">
    <reaction evidence="1">
        <text>Couples ATP hydrolysis with the unwinding of duplex DNA by translocating in the 3'-5' direction.</text>
        <dbReference type="EC" id="5.6.2.4"/>
    </reaction>
</comment>
<comment type="catalytic activity">
    <reaction evidence="1">
        <text>ATP + H2O = ADP + phosphate + H(+)</text>
        <dbReference type="Rhea" id="RHEA:13065"/>
        <dbReference type="ChEBI" id="CHEBI:15377"/>
        <dbReference type="ChEBI" id="CHEBI:15378"/>
        <dbReference type="ChEBI" id="CHEBI:30616"/>
        <dbReference type="ChEBI" id="CHEBI:43474"/>
        <dbReference type="ChEBI" id="CHEBI:456216"/>
        <dbReference type="EC" id="5.6.2.4"/>
    </reaction>
</comment>
<comment type="cofactor">
    <cofactor evidence="1">
        <name>Mg(2+)</name>
        <dbReference type="ChEBI" id="CHEBI:18420"/>
    </cofactor>
</comment>
<comment type="subunit">
    <text evidence="1">Heterodimer of AddA and AddB/RexB.</text>
</comment>
<comment type="similarity">
    <text evidence="1">Belongs to the helicase family. AddA subfamily.</text>
</comment>
<accession>Q836J8</accession>
<sequence length="1264" mass="146451">MSKTIPLRPANEQFTDSQWQAVFDGDENILVSASAGSGKTTVLVRRVIEKVKSGVDIDRLLIVTYTEAAAREMKERIQVALQKAMNEEQDPERRRHFSRQIALLPTANISTLHAFCLTVIRRFYYLIDIDPVFRMLTDETETLLLKEDVWDALREQFYAENQEAFYQLTANFSNDRSDDGLTNLIFSFYEFAKANPDPEAWINGLTQAYEVGDQLGESKLFQTYLKPLAVETLQRTLQRYEEMVTLTEGEEKLQKIWYLAQNEKEQTKQFLQFLERNDLESAYNLTELLSFDRYPTVRAEELKPTAEQAKQLREQNKKALNDLKKQLFTLSPDAMKQVLKEATPIVQEMAHVGKQFMEAYGAEKRLKNLVDFNDLEHYTLAILAKNQADGWHASEASVYYREKFDEVLVDEYQDINQLQESILYWLRRPLSTEGNLFMVGDVKQSIYSFRLADPTLFIEKYNQYGQGKEGKRIILAENFRSRKDVLDFTNLVFSQLMDERVGQIAYDESAALVHGFDQFSEAADYSTELLIYEKKATESVEFPELQSPELLIEDKTEGELYVTALKIRELIDQNFLIYDKKLKTDRPITYQDIVLLTPTKKNNLTILDVFKSLEIPVQVNDAQNYFQATEIRTMIALLQLIDNPYQDIPLAAVLRSPIVGLKENELVLIRLANKETSYYEAFLTFNQKMEPTMEEAVVQEKTIRFAESLEKWREQARRNQISNLLWTIYRETAYLDYVGGLPVGKQRQANLYALVDRAAAYEKTTFRGLFQFVRFIEKMQEKDKDLAEPVVLSEENAVRVMTIHASKGLEFPVVFVLDMTKEFNVSDLNERYIFEENLGVGIRYLQPEERVMYDTLPFLAIKQVRLRKLLSEEMRKLYVALTRAEQKLFLVGSYKDQAAMWKEWLKVGDVETLVLPAENRLQSKSSLMNWVGMTLVRHQKADEYQQEVVVSNVPQVKKHPANFHIQWFNEEQLRAAIQQLQLPERQAEDLAEKAQLSADKINRGLARLSFNYPFEVATRTTSYQSVSEIKRVFDDPDNKEIGKIEVREDNTIQAQPLIVNRMIEGDLSKPKFLDTVQAPSAAEIGTATHYLLQLIDLSKQPSYEEVRAVQERLVENKLILPAIAEKMNLEQIVAFFDTALGKQLIQHHQTVRREQPFSMLIEAEELIQNYPETTQDDLLIHGIIDGYIELDNQCILYDYKTDHVKGTSPQAISEIVERYRGQMNLYRRALQEATHKEVSHVYLILLNGGVIIDMQTGNVVDFIK</sequence>
<proteinExistence type="inferred from homology"/>
<protein>
    <recommendedName>
        <fullName evidence="1">ATP-dependent helicase/nuclease subunit A</fullName>
        <ecNumber evidence="1">3.1.-.-</ecNumber>
        <ecNumber evidence="1">5.6.2.4</ecNumber>
    </recommendedName>
    <alternativeName>
        <fullName evidence="1">ATP-dependent helicase/nuclease AddA</fullName>
    </alternativeName>
    <alternativeName>
        <fullName evidence="1">DNA 3'-5' helicase AddA</fullName>
    </alternativeName>
</protein>
<name>ADDA_ENTFA</name>